<name>LUR11_ARATH</name>
<sequence>MKLIFIFLTLLIFVSSCTSILIKESSEEERIYPFNPVASPFDPRSLNQILKIGKIGYCFDCARACMRRDRYIRTCSFERKLCRCSYSHIHHTHG</sequence>
<protein>
    <recommendedName>
        <fullName evidence="7">Protein LURE 1.1</fullName>
        <shortName evidence="7">AtLURE1.1</shortName>
    </recommendedName>
    <alternativeName>
        <fullName evidence="7">Cysteine-Rich Peptide 810_1.1</fullName>
        <shortName evidence="7">CRP810_1.1</shortName>
    </alternativeName>
    <alternativeName>
        <fullName evidence="6">Defensin-like protein 217</fullName>
    </alternativeName>
</protein>
<dbReference type="EMBL" id="AB017070">
    <property type="status" value="NOT_ANNOTATED_CDS"/>
    <property type="molecule type" value="Genomic_DNA"/>
</dbReference>
<dbReference type="EMBL" id="CP002688">
    <property type="protein sequence ID" value="AED94938.1"/>
    <property type="molecule type" value="Genomic_DNA"/>
</dbReference>
<dbReference type="EMBL" id="AY803253">
    <property type="protein sequence ID" value="AAX39294.1"/>
    <property type="molecule type" value="mRNA"/>
</dbReference>
<dbReference type="RefSeq" id="NP_001031999.1">
    <property type="nucleotide sequence ID" value="NM_001036922.2"/>
</dbReference>
<dbReference type="SMR" id="Q4VP09"/>
<dbReference type="STRING" id="3702.Q4VP09"/>
<dbReference type="PaxDb" id="3702-AT5G43285.1"/>
<dbReference type="EnsemblPlants" id="AT5G43285.1">
    <property type="protein sequence ID" value="AT5G43285.1"/>
    <property type="gene ID" value="AT5G43285"/>
</dbReference>
<dbReference type="GeneID" id="3771413"/>
<dbReference type="Gramene" id="AT5G43285.1">
    <property type="protein sequence ID" value="AT5G43285.1"/>
    <property type="gene ID" value="AT5G43285"/>
</dbReference>
<dbReference type="KEGG" id="ath:AT5G43285"/>
<dbReference type="Araport" id="AT5G43285"/>
<dbReference type="TAIR" id="AT5G43285">
    <property type="gene designation" value="LURE1.1"/>
</dbReference>
<dbReference type="HOGENOM" id="CLU_180309_0_0_1"/>
<dbReference type="InParanoid" id="Q4VP09"/>
<dbReference type="OMA" id="HIHHTHG"/>
<dbReference type="PhylomeDB" id="Q4VP09"/>
<dbReference type="PRO" id="PR:Q4VP09"/>
<dbReference type="Proteomes" id="UP000006548">
    <property type="component" value="Chromosome 5"/>
</dbReference>
<dbReference type="ExpressionAtlas" id="Q4VP09">
    <property type="expression patterns" value="baseline and differential"/>
</dbReference>
<dbReference type="GO" id="GO:0005576">
    <property type="term" value="C:extracellular region"/>
    <property type="evidence" value="ECO:0007669"/>
    <property type="project" value="UniProtKB-SubCell"/>
</dbReference>
<dbReference type="GO" id="GO:0010183">
    <property type="term" value="P:pollen tube guidance"/>
    <property type="evidence" value="ECO:0000314"/>
    <property type="project" value="TAIR"/>
</dbReference>
<dbReference type="CDD" id="cd21804">
    <property type="entry name" value="DEFL_AtLURE1-like"/>
    <property type="match status" value="1"/>
</dbReference>
<dbReference type="InterPro" id="IPR047497">
    <property type="entry name" value="DEFL_AtLURE1-like"/>
</dbReference>
<reference key="1">
    <citation type="journal article" date="1999" name="DNA Res.">
        <title>Structural analysis of Arabidopsis thaliana chromosome 5. IX. Sequence features of the regions of 1,011,550 bp covered by seventeen P1 and TAC clones.</title>
        <authorList>
            <person name="Kaneko T."/>
            <person name="Katoh T."/>
            <person name="Sato S."/>
            <person name="Nakamura Y."/>
            <person name="Asamizu E."/>
            <person name="Kotani H."/>
            <person name="Miyajima N."/>
            <person name="Tabata S."/>
        </authorList>
    </citation>
    <scope>NUCLEOTIDE SEQUENCE [LARGE SCALE GENOMIC DNA]</scope>
    <source>
        <strain>cv. Columbia</strain>
    </source>
</reference>
<reference key="2">
    <citation type="journal article" date="2017" name="Plant J.">
        <title>Araport11: a complete reannotation of the Arabidopsis thaliana reference genome.</title>
        <authorList>
            <person name="Cheng C.Y."/>
            <person name="Krishnakumar V."/>
            <person name="Chan A.P."/>
            <person name="Thibaud-Nissen F."/>
            <person name="Schobel S."/>
            <person name="Town C.D."/>
        </authorList>
    </citation>
    <scope>GENOME REANNOTATION</scope>
    <source>
        <strain>cv. Columbia</strain>
    </source>
</reference>
<reference key="3">
    <citation type="journal article" date="2005" name="Plant Physiol.">
        <title>Genome organization of more than 300 defensin-like genes in Arabidopsis.</title>
        <authorList>
            <person name="Silverstein K.A.T."/>
            <person name="Graham M.A."/>
            <person name="Paape T.D."/>
            <person name="VandenBosch K.A."/>
        </authorList>
    </citation>
    <scope>NUCLEOTIDE SEQUENCE [MRNA] OF 14-75</scope>
    <scope>GENE FAMILY</scope>
</reference>
<reference key="4">
    <citation type="journal article" date="2012" name="PLoS Biol.">
        <title>A species-specific cluster of defensin-like genes encodes diffusible pollen tube attractants in Arabidopsis.</title>
        <authorList>
            <person name="Takeuchi H."/>
            <person name="Higashiyama T."/>
        </authorList>
    </citation>
    <scope>FUNCTION</scope>
    <scope>GENE FAMILY</scope>
    <scope>NOMENCLATURE</scope>
    <scope>TISSUE SPECIFICITY</scope>
    <scope>SUBCELLULAR LOCATION</scope>
</reference>
<reference key="5">
    <citation type="journal article" date="2017" name="Nat. Commun.">
        <title>Structural basis for receptor recognition of pollen tube attraction peptides.</title>
        <authorList>
            <person name="Zhang X."/>
            <person name="Liu W."/>
            <person name="Nagae T.T."/>
            <person name="Takeuchi H."/>
            <person name="Zhang H."/>
            <person name="Han Z."/>
            <person name="Higashiyama T."/>
            <person name="Chai J."/>
        </authorList>
    </citation>
    <scope>INTERACTION WITH PRK6</scope>
</reference>
<accession>Q4VP09</accession>
<gene>
    <name evidence="7" type="primary">LURE1.1</name>
    <name evidence="7" type="synonym">CRP810_1.1</name>
    <name evidence="9" type="ordered locus">At5g43285</name>
    <name evidence="10" type="ORF">MNL12</name>
</gene>
<evidence type="ECO:0000250" key="1">
    <source>
        <dbReference type="UniProtKB" id="Q09198"/>
    </source>
</evidence>
<evidence type="ECO:0000250" key="2">
    <source>
        <dbReference type="UniProtKB" id="Q4VP08"/>
    </source>
</evidence>
<evidence type="ECO:0000255" key="3"/>
<evidence type="ECO:0000269" key="4">
    <source>
    </source>
</evidence>
<evidence type="ECO:0000269" key="5">
    <source>
    </source>
</evidence>
<evidence type="ECO:0000303" key="6">
    <source>
    </source>
</evidence>
<evidence type="ECO:0000303" key="7">
    <source>
    </source>
</evidence>
<evidence type="ECO:0000305" key="8"/>
<evidence type="ECO:0000312" key="9">
    <source>
        <dbReference type="Araport" id="AT5G43285"/>
    </source>
</evidence>
<evidence type="ECO:0000312" key="10">
    <source>
        <dbReference type="EMBL" id="AB017070"/>
    </source>
</evidence>
<feature type="signal peptide" evidence="3">
    <location>
        <begin position="1"/>
        <end position="19"/>
    </location>
</feature>
<feature type="chain" id="PRO_0000379709" description="Protein LURE 1.1">
    <location>
        <begin position="20"/>
        <end position="94"/>
    </location>
</feature>
<feature type="region of interest" description="PRK6 binding" evidence="2">
    <location>
        <begin position="67"/>
        <end position="87"/>
    </location>
</feature>
<feature type="disulfide bond" evidence="1">
    <location>
        <begin position="58"/>
        <end position="75"/>
    </location>
</feature>
<feature type="disulfide bond" evidence="1">
    <location>
        <begin position="61"/>
        <end position="82"/>
    </location>
</feature>
<feature type="disulfide bond" evidence="1">
    <location>
        <begin position="65"/>
        <end position="84"/>
    </location>
</feature>
<keyword id="KW-1015">Disulfide bond</keyword>
<keyword id="KW-1185">Reference proteome</keyword>
<keyword id="KW-0964">Secreted</keyword>
<keyword id="KW-0732">Signal</keyword>
<organism>
    <name type="scientific">Arabidopsis thaliana</name>
    <name type="common">Mouse-ear cress</name>
    <dbReference type="NCBI Taxonomy" id="3702"/>
    <lineage>
        <taxon>Eukaryota</taxon>
        <taxon>Viridiplantae</taxon>
        <taxon>Streptophyta</taxon>
        <taxon>Embryophyta</taxon>
        <taxon>Tracheophyta</taxon>
        <taxon>Spermatophyta</taxon>
        <taxon>Magnoliopsida</taxon>
        <taxon>eudicotyledons</taxon>
        <taxon>Gunneridae</taxon>
        <taxon>Pentapetalae</taxon>
        <taxon>rosids</taxon>
        <taxon>malvids</taxon>
        <taxon>Brassicales</taxon>
        <taxon>Brassicaceae</taxon>
        <taxon>Camelineae</taxon>
        <taxon>Arabidopsis</taxon>
    </lineage>
</organism>
<comment type="function">
    <text evidence="4">Pollen tube attractants guiding pollen tubes to the ovular micropyle.</text>
</comment>
<comment type="subunit">
    <text evidence="5">Binds to PRK6 LRRs.</text>
</comment>
<comment type="subcellular location">
    <subcellularLocation>
        <location evidence="4">Secreted</location>
    </subcellularLocation>
    <text evidence="4">found at the micropylar end of the female gametophyte, possibly at the filiform apparatus of the synergid cell. Difuses to the surface of the funiculus of the ovule through the micropyle.</text>
</comment>
<comment type="tissue specificity">
    <text evidence="4">Expressed in the pistil. Detected exclusively in the synergid cells.</text>
</comment>
<comment type="similarity">
    <text evidence="8">Belongs to the DEFL family.</text>
</comment>
<comment type="caution">
    <text evidence="8">Lacks 1 of the 4 disulfide bonds, which are conserved features of the family.</text>
</comment>
<proteinExistence type="evidence at protein level"/>